<reference key="1">
    <citation type="journal article" date="2009" name="PLoS ONE">
        <title>Complete genome sequence of Francisella tularensis subspecies holarctica FTNF002-00.</title>
        <authorList>
            <person name="Barabote R.D."/>
            <person name="Xie G."/>
            <person name="Brettin T.S."/>
            <person name="Hinrichs S.H."/>
            <person name="Fey P.D."/>
            <person name="Jay J.J."/>
            <person name="Engle J.L."/>
            <person name="Godbole S.D."/>
            <person name="Noronha J.M."/>
            <person name="Scheuermann R.H."/>
            <person name="Zhou L.W."/>
            <person name="Lion C."/>
            <person name="Dempsey M.P."/>
        </authorList>
    </citation>
    <scope>NUCLEOTIDE SEQUENCE [LARGE SCALE GENOMIC DNA]</scope>
    <source>
        <strain>FTNF002-00 / FTA</strain>
    </source>
</reference>
<proteinExistence type="inferred from homology"/>
<protein>
    <recommendedName>
        <fullName evidence="2">Translation initiation factor IF-2</fullName>
    </recommendedName>
</protein>
<evidence type="ECO:0000250" key="1"/>
<evidence type="ECO:0000255" key="2">
    <source>
        <dbReference type="HAMAP-Rule" id="MF_00100"/>
    </source>
</evidence>
<sequence>MAEITVGQLAQQTNKEVDALLKQLKSFGIEKSSEKDTLTPTEMKTLLEKINSAKNTATRKKVTSVKLDGKHKINVSVKRKRRVAKKMEQQESTTLEQPQELETMVQEVSQQVDIVKEQDNIEQIVENKEAVKVQEQRQAEIAKPVIKDSGFKITAMPEIKIEEIVAEDDEGLAASDKQAKKKAAKKVFSEAVNTNTKYKCEEEEKKSKAKKAGGKGFKKANPRQLSQLAGDLESFDEFGAKKGKLKAPKVKKQEFTKPVENTVRTVEIHEGITVSELAQKMAVKGAEIVKVLFNMGVMATINQSLDQDTAILIVEEMGHKYTLHNENALEEAVTIVDRSSYKKISRAPVVTIMGHVDHGKTSLLDYIRQTRVVAGEAGGITQHIGAYSVKTDKGSITFLDTPGHEAFTSMRARGAKSTDIVILVVAADDGVMPQTEEAIQHAKAARVPIVVAVNKIDKPEADSDKVISELAQRNVIPESWGGDVMFVNVSAKTGEGVADLLEAVLLQSEVLELEAFAEGLAEGVVIESRLEKGRGPVATVLVQNGNLKQGDNILCGTEYGRVRAMHNDLGKKIKAAGPATPVEILGLSGVPAAGDEMVVIENEKKAKELAAQRSQKQKEAKIAQEQSLKLSNMFNNMGKEGEQQVLKIILKGDVQGSVEAIRESLLKLSTDEVKVDIIASGIGAITSSDVTLAVASTAVVIGFNVRADSAAKKLAETDGVEFRYYNIIYDLIDDVKKAMSGLLSPEMKEQIIGIAEVREVYRSSKFGSIAGCMVIEGVVKRTNPIRVLRNNVVIYEGTLESLKRFKDDASEVKKGLECGIGVKNYNDVREGDQIEVFEVIEVAKEL</sequence>
<feature type="chain" id="PRO_1000008244" description="Translation initiation factor IF-2">
    <location>
        <begin position="1"/>
        <end position="846"/>
    </location>
</feature>
<feature type="domain" description="tr-type G">
    <location>
        <begin position="345"/>
        <end position="512"/>
    </location>
</feature>
<feature type="region of interest" description="G1" evidence="1">
    <location>
        <begin position="354"/>
        <end position="361"/>
    </location>
</feature>
<feature type="region of interest" description="G2" evidence="1">
    <location>
        <begin position="379"/>
        <end position="383"/>
    </location>
</feature>
<feature type="region of interest" description="G3" evidence="1">
    <location>
        <begin position="400"/>
        <end position="403"/>
    </location>
</feature>
<feature type="region of interest" description="G4" evidence="1">
    <location>
        <begin position="454"/>
        <end position="457"/>
    </location>
</feature>
<feature type="region of interest" description="G5" evidence="1">
    <location>
        <begin position="490"/>
        <end position="492"/>
    </location>
</feature>
<feature type="binding site" evidence="2">
    <location>
        <begin position="354"/>
        <end position="361"/>
    </location>
    <ligand>
        <name>GTP</name>
        <dbReference type="ChEBI" id="CHEBI:37565"/>
    </ligand>
</feature>
<feature type="binding site" evidence="2">
    <location>
        <begin position="400"/>
        <end position="404"/>
    </location>
    <ligand>
        <name>GTP</name>
        <dbReference type="ChEBI" id="CHEBI:37565"/>
    </ligand>
</feature>
<feature type="binding site" evidence="2">
    <location>
        <begin position="454"/>
        <end position="457"/>
    </location>
    <ligand>
        <name>GTP</name>
        <dbReference type="ChEBI" id="CHEBI:37565"/>
    </ligand>
</feature>
<gene>
    <name evidence="2" type="primary">infB</name>
    <name type="ordered locus">FTA_1916</name>
</gene>
<comment type="function">
    <text evidence="2">One of the essential components for the initiation of protein synthesis. Protects formylmethionyl-tRNA from spontaneous hydrolysis and promotes its binding to the 30S ribosomal subunits. Also involved in the hydrolysis of GTP during the formation of the 70S ribosomal complex.</text>
</comment>
<comment type="subcellular location">
    <subcellularLocation>
        <location evidence="2">Cytoplasm</location>
    </subcellularLocation>
</comment>
<comment type="similarity">
    <text evidence="2">Belongs to the TRAFAC class translation factor GTPase superfamily. Classic translation factor GTPase family. IF-2 subfamily.</text>
</comment>
<name>IF2_FRATF</name>
<keyword id="KW-0963">Cytoplasm</keyword>
<keyword id="KW-0342">GTP-binding</keyword>
<keyword id="KW-0396">Initiation factor</keyword>
<keyword id="KW-0547">Nucleotide-binding</keyword>
<keyword id="KW-0648">Protein biosynthesis</keyword>
<organism>
    <name type="scientific">Francisella tularensis subsp. holarctica (strain FTNF002-00 / FTA)</name>
    <dbReference type="NCBI Taxonomy" id="458234"/>
    <lineage>
        <taxon>Bacteria</taxon>
        <taxon>Pseudomonadati</taxon>
        <taxon>Pseudomonadota</taxon>
        <taxon>Gammaproteobacteria</taxon>
        <taxon>Thiotrichales</taxon>
        <taxon>Francisellaceae</taxon>
        <taxon>Francisella</taxon>
    </lineage>
</organism>
<accession>A7NEI8</accession>
<dbReference type="EMBL" id="CP000803">
    <property type="protein sequence ID" value="ABU62391.1"/>
    <property type="molecule type" value="Genomic_DNA"/>
</dbReference>
<dbReference type="RefSeq" id="WP_010032493.1">
    <property type="nucleotide sequence ID" value="NC_009749.1"/>
</dbReference>
<dbReference type="SMR" id="A7NEI8"/>
<dbReference type="KEGG" id="fta:FTA_1916"/>
<dbReference type="HOGENOM" id="CLU_006301_6_2_6"/>
<dbReference type="GO" id="GO:0005829">
    <property type="term" value="C:cytosol"/>
    <property type="evidence" value="ECO:0007669"/>
    <property type="project" value="TreeGrafter"/>
</dbReference>
<dbReference type="GO" id="GO:0005525">
    <property type="term" value="F:GTP binding"/>
    <property type="evidence" value="ECO:0007669"/>
    <property type="project" value="UniProtKB-KW"/>
</dbReference>
<dbReference type="GO" id="GO:0003924">
    <property type="term" value="F:GTPase activity"/>
    <property type="evidence" value="ECO:0007669"/>
    <property type="project" value="UniProtKB-UniRule"/>
</dbReference>
<dbReference type="GO" id="GO:0003743">
    <property type="term" value="F:translation initiation factor activity"/>
    <property type="evidence" value="ECO:0007669"/>
    <property type="project" value="UniProtKB-UniRule"/>
</dbReference>
<dbReference type="CDD" id="cd01887">
    <property type="entry name" value="IF2_eIF5B"/>
    <property type="match status" value="1"/>
</dbReference>
<dbReference type="CDD" id="cd03702">
    <property type="entry name" value="IF2_mtIF2_II"/>
    <property type="match status" value="1"/>
</dbReference>
<dbReference type="CDD" id="cd03692">
    <property type="entry name" value="mtIF2_IVc"/>
    <property type="match status" value="1"/>
</dbReference>
<dbReference type="FunFam" id="2.40.30.10:FF:000007">
    <property type="entry name" value="Translation initiation factor IF-2"/>
    <property type="match status" value="1"/>
</dbReference>
<dbReference type="FunFam" id="2.40.30.10:FF:000008">
    <property type="entry name" value="Translation initiation factor IF-2"/>
    <property type="match status" value="1"/>
</dbReference>
<dbReference type="FunFam" id="3.40.50.10050:FF:000001">
    <property type="entry name" value="Translation initiation factor IF-2"/>
    <property type="match status" value="1"/>
</dbReference>
<dbReference type="FunFam" id="3.40.50.300:FF:000019">
    <property type="entry name" value="Translation initiation factor IF-2"/>
    <property type="match status" value="1"/>
</dbReference>
<dbReference type="Gene3D" id="3.40.50.300">
    <property type="entry name" value="P-loop containing nucleotide triphosphate hydrolases"/>
    <property type="match status" value="1"/>
</dbReference>
<dbReference type="Gene3D" id="3.30.56.50">
    <property type="entry name" value="Putative DNA-binding domain, N-terminal subdomain of bacterial translation initiation factor IF2"/>
    <property type="match status" value="1"/>
</dbReference>
<dbReference type="Gene3D" id="2.40.30.10">
    <property type="entry name" value="Translation factors"/>
    <property type="match status" value="2"/>
</dbReference>
<dbReference type="Gene3D" id="3.40.50.10050">
    <property type="entry name" value="Translation initiation factor IF- 2, domain 3"/>
    <property type="match status" value="1"/>
</dbReference>
<dbReference type="HAMAP" id="MF_00100_B">
    <property type="entry name" value="IF_2_B"/>
    <property type="match status" value="1"/>
</dbReference>
<dbReference type="InterPro" id="IPR009061">
    <property type="entry name" value="DNA-bd_dom_put_sf"/>
</dbReference>
<dbReference type="InterPro" id="IPR053905">
    <property type="entry name" value="EF-G-like_DII"/>
</dbReference>
<dbReference type="InterPro" id="IPR044145">
    <property type="entry name" value="IF2_II"/>
</dbReference>
<dbReference type="InterPro" id="IPR006847">
    <property type="entry name" value="IF2_N"/>
</dbReference>
<dbReference type="InterPro" id="IPR027417">
    <property type="entry name" value="P-loop_NTPase"/>
</dbReference>
<dbReference type="InterPro" id="IPR005225">
    <property type="entry name" value="Small_GTP-bd"/>
</dbReference>
<dbReference type="InterPro" id="IPR000795">
    <property type="entry name" value="T_Tr_GTP-bd_dom"/>
</dbReference>
<dbReference type="InterPro" id="IPR000178">
    <property type="entry name" value="TF_IF2_bacterial-like"/>
</dbReference>
<dbReference type="InterPro" id="IPR015760">
    <property type="entry name" value="TIF_IF2"/>
</dbReference>
<dbReference type="InterPro" id="IPR023115">
    <property type="entry name" value="TIF_IF2_dom3"/>
</dbReference>
<dbReference type="InterPro" id="IPR036925">
    <property type="entry name" value="TIF_IF2_dom3_sf"/>
</dbReference>
<dbReference type="InterPro" id="IPR009000">
    <property type="entry name" value="Transl_B-barrel_sf"/>
</dbReference>
<dbReference type="NCBIfam" id="TIGR00487">
    <property type="entry name" value="IF-2"/>
    <property type="match status" value="1"/>
</dbReference>
<dbReference type="NCBIfam" id="TIGR00231">
    <property type="entry name" value="small_GTP"/>
    <property type="match status" value="1"/>
</dbReference>
<dbReference type="PANTHER" id="PTHR43381:SF5">
    <property type="entry name" value="TR-TYPE G DOMAIN-CONTAINING PROTEIN"/>
    <property type="match status" value="1"/>
</dbReference>
<dbReference type="PANTHER" id="PTHR43381">
    <property type="entry name" value="TRANSLATION INITIATION FACTOR IF-2-RELATED"/>
    <property type="match status" value="1"/>
</dbReference>
<dbReference type="Pfam" id="PF22042">
    <property type="entry name" value="EF-G_D2"/>
    <property type="match status" value="1"/>
</dbReference>
<dbReference type="Pfam" id="PF00009">
    <property type="entry name" value="GTP_EFTU"/>
    <property type="match status" value="1"/>
</dbReference>
<dbReference type="Pfam" id="PF11987">
    <property type="entry name" value="IF-2"/>
    <property type="match status" value="1"/>
</dbReference>
<dbReference type="Pfam" id="PF04760">
    <property type="entry name" value="IF2_N"/>
    <property type="match status" value="2"/>
</dbReference>
<dbReference type="SUPFAM" id="SSF52156">
    <property type="entry name" value="Initiation factor IF2/eIF5b, domain 3"/>
    <property type="match status" value="1"/>
</dbReference>
<dbReference type="SUPFAM" id="SSF52540">
    <property type="entry name" value="P-loop containing nucleoside triphosphate hydrolases"/>
    <property type="match status" value="1"/>
</dbReference>
<dbReference type="SUPFAM" id="SSF46955">
    <property type="entry name" value="Putative DNA-binding domain"/>
    <property type="match status" value="1"/>
</dbReference>
<dbReference type="SUPFAM" id="SSF50447">
    <property type="entry name" value="Translation proteins"/>
    <property type="match status" value="2"/>
</dbReference>
<dbReference type="PROSITE" id="PS51722">
    <property type="entry name" value="G_TR_2"/>
    <property type="match status" value="1"/>
</dbReference>
<dbReference type="PROSITE" id="PS01176">
    <property type="entry name" value="IF2"/>
    <property type="match status" value="1"/>
</dbReference>